<keyword id="KW-0002">3D-structure</keyword>
<keyword id="KW-0007">Acetylation</keyword>
<keyword id="KW-0013">ADP-ribosylation</keyword>
<keyword id="KW-0963">Cytoplasm</keyword>
<keyword id="KW-0379">Hydroxylation</keyword>
<keyword id="KW-1017">Isopeptide bond</keyword>
<keyword id="KW-0539">Nucleus</keyword>
<keyword id="KW-0597">Phosphoprotein</keyword>
<keyword id="KW-1185">Reference proteome</keyword>
<keyword id="KW-0687">Ribonucleoprotein</keyword>
<keyword id="KW-0689">Ribosomal protein</keyword>
<keyword id="KW-0832">Ubl conjugation</keyword>
<sequence length="249" mass="28681">MKLNISFPATGCQKLIEVDDERKLRTFYEKRMATEVAADALGEEWKGYVVRISGGNDKQGFPMKQGVLTHGRVRLLLSKGHSCYRPRRTGERKRKSVRGCIVDANLSVLNLVIVKKGEKDIPGLTDTTVPRRLGPKRASRIRKLFNLSKEDDVRQYVVRKPLNKEGKKPRTKAPKIQRLVTPRVLQHKRRRIALKKQRTKKNKEEAAEYAKLLAKRMKEAKEKRQEQIAKRRRLSSLRASTSKSESSQK</sequence>
<protein>
    <recommendedName>
        <fullName>Small ribosomal subunit protein eS6</fullName>
    </recommendedName>
    <alternativeName>
        <fullName>40S ribosomal protein S6</fullName>
    </alternativeName>
</protein>
<proteinExistence type="evidence at protein level"/>
<accession>G1TM55</accession>
<accession>G1SJH6</accession>
<gene>
    <name type="primary">RPS6</name>
</gene>
<organism>
    <name type="scientific">Oryctolagus cuniculus</name>
    <name type="common">Rabbit</name>
    <dbReference type="NCBI Taxonomy" id="9986"/>
    <lineage>
        <taxon>Eukaryota</taxon>
        <taxon>Metazoa</taxon>
        <taxon>Chordata</taxon>
        <taxon>Craniata</taxon>
        <taxon>Vertebrata</taxon>
        <taxon>Euteleostomi</taxon>
        <taxon>Mammalia</taxon>
        <taxon>Eutheria</taxon>
        <taxon>Euarchontoglires</taxon>
        <taxon>Glires</taxon>
        <taxon>Lagomorpha</taxon>
        <taxon>Leporidae</taxon>
        <taxon>Oryctolagus</taxon>
    </lineage>
</organism>
<evidence type="ECO:0000250" key="1">
    <source>
        <dbReference type="UniProtKB" id="P62753"/>
    </source>
</evidence>
<evidence type="ECO:0000256" key="2">
    <source>
        <dbReference type="SAM" id="MobiDB-lite"/>
    </source>
</evidence>
<evidence type="ECO:0000269" key="3">
    <source>
    </source>
</evidence>
<evidence type="ECO:0000269" key="4">
    <source>
    </source>
</evidence>
<evidence type="ECO:0000269" key="5">
    <source>
    </source>
</evidence>
<evidence type="ECO:0000269" key="6">
    <source>
    </source>
</evidence>
<evidence type="ECO:0000269" key="7">
    <source>
    </source>
</evidence>
<evidence type="ECO:0000269" key="8">
    <source>
    </source>
</evidence>
<evidence type="ECO:0000269" key="9">
    <source>
    </source>
</evidence>
<evidence type="ECO:0000269" key="10">
    <source>
    </source>
</evidence>
<evidence type="ECO:0000269" key="11">
    <source>
    </source>
</evidence>
<evidence type="ECO:0000269" key="12">
    <source>
    </source>
</evidence>
<evidence type="ECO:0000269" key="13">
    <source>
    </source>
</evidence>
<evidence type="ECO:0000269" key="14">
    <source>
    </source>
</evidence>
<evidence type="ECO:0000269" key="15">
    <source>
    </source>
</evidence>
<evidence type="ECO:0000269" key="16">
    <source>
    </source>
</evidence>
<evidence type="ECO:0000269" key="17">
    <source>
    </source>
</evidence>
<evidence type="ECO:0000305" key="18"/>
<evidence type="ECO:0007744" key="19">
    <source>
        <dbReference type="PDB" id="3JAG"/>
    </source>
</evidence>
<evidence type="ECO:0007744" key="20">
    <source>
        <dbReference type="PDB" id="3JAH"/>
    </source>
</evidence>
<evidence type="ECO:0007744" key="21">
    <source>
        <dbReference type="PDB" id="4D5L"/>
    </source>
</evidence>
<evidence type="ECO:0007744" key="22">
    <source>
        <dbReference type="PDB" id="4D61"/>
    </source>
</evidence>
<evidence type="ECO:0007744" key="23">
    <source>
        <dbReference type="PDB" id="4KZX"/>
    </source>
</evidence>
<evidence type="ECO:0007744" key="24">
    <source>
        <dbReference type="PDB" id="4KZY"/>
    </source>
</evidence>
<evidence type="ECO:0007744" key="25">
    <source>
        <dbReference type="PDB" id="5LZS"/>
    </source>
</evidence>
<evidence type="ECO:0007744" key="26">
    <source>
        <dbReference type="PDB" id="5LZT"/>
    </source>
</evidence>
<evidence type="ECO:0007744" key="27">
    <source>
        <dbReference type="PDB" id="6D90"/>
    </source>
</evidence>
<evidence type="ECO:0007744" key="28">
    <source>
        <dbReference type="PDB" id="6D9J"/>
    </source>
</evidence>
<evidence type="ECO:0007744" key="29">
    <source>
        <dbReference type="PDB" id="6GZ3"/>
    </source>
</evidence>
<evidence type="ECO:0007744" key="30">
    <source>
        <dbReference type="PDB" id="6HCF"/>
    </source>
</evidence>
<evidence type="ECO:0007744" key="31">
    <source>
        <dbReference type="PDB" id="6HCJ"/>
    </source>
</evidence>
<evidence type="ECO:0007744" key="32">
    <source>
        <dbReference type="PDB" id="6MTB"/>
    </source>
</evidence>
<evidence type="ECO:0007744" key="33">
    <source>
        <dbReference type="PDB" id="6MTC"/>
    </source>
</evidence>
<evidence type="ECO:0007744" key="34">
    <source>
        <dbReference type="PDB" id="6P4G"/>
    </source>
</evidence>
<evidence type="ECO:0007744" key="35">
    <source>
        <dbReference type="PDB" id="6P4H"/>
    </source>
</evidence>
<evidence type="ECO:0007744" key="36">
    <source>
        <dbReference type="PDB" id="6R5Q"/>
    </source>
</evidence>
<evidence type="ECO:0007744" key="37">
    <source>
        <dbReference type="PDB" id="6R6G"/>
    </source>
</evidence>
<evidence type="ECO:0007744" key="38">
    <source>
        <dbReference type="PDB" id="6SGC"/>
    </source>
</evidence>
<evidence type="ECO:0007744" key="39">
    <source>
        <dbReference type="PDB" id="6W2S"/>
    </source>
</evidence>
<evidence type="ECO:0007744" key="40">
    <source>
        <dbReference type="PDB" id="6W2T"/>
    </source>
</evidence>
<evidence type="ECO:0007744" key="41">
    <source>
        <dbReference type="PDB" id="6ZVK"/>
    </source>
</evidence>
<evidence type="ECO:0007744" key="42">
    <source>
        <dbReference type="PDB" id="7A01"/>
    </source>
</evidence>
<evidence type="ECO:0007744" key="43">
    <source>
        <dbReference type="PDB" id="7OYD"/>
    </source>
</evidence>
<evidence type="ECO:0007744" key="44">
    <source>
        <dbReference type="PDB" id="7UCJ"/>
    </source>
</evidence>
<evidence type="ECO:0007744" key="45">
    <source>
        <dbReference type="PDB" id="7UCK"/>
    </source>
</evidence>
<evidence type="ECO:0007829" key="46">
    <source>
        <dbReference type="PDB" id="6P4G"/>
    </source>
</evidence>
<evidence type="ECO:0007829" key="47">
    <source>
        <dbReference type="PDB" id="6P4H"/>
    </source>
</evidence>
<dbReference type="RefSeq" id="XP_002708126.1">
    <property type="nucleotide sequence ID" value="XM_002708080.5"/>
</dbReference>
<dbReference type="RefSeq" id="XP_002709459.1">
    <property type="nucleotide sequence ID" value="XM_002709413.3"/>
</dbReference>
<dbReference type="RefSeq" id="XP_017205954.1">
    <property type="nucleotide sequence ID" value="XM_017350465.1"/>
</dbReference>
<dbReference type="PDB" id="3JAG">
    <property type="method" value="EM"/>
    <property type="resolution" value="3.65 A"/>
    <property type="chains" value="GG=1-201"/>
</dbReference>
<dbReference type="PDB" id="3JAH">
    <property type="method" value="EM"/>
    <property type="resolution" value="3.45 A"/>
    <property type="chains" value="GG=1-201"/>
</dbReference>
<dbReference type="PDB" id="3JAI">
    <property type="method" value="EM"/>
    <property type="resolution" value="3.65 A"/>
    <property type="chains" value="GG=1-201"/>
</dbReference>
<dbReference type="PDB" id="4D5L">
    <property type="method" value="EM"/>
    <property type="resolution" value="9.00 A"/>
    <property type="chains" value="G=1-201"/>
</dbReference>
<dbReference type="PDB" id="4D61">
    <property type="method" value="EM"/>
    <property type="resolution" value="9.00 A"/>
    <property type="chains" value="G=1-201"/>
</dbReference>
<dbReference type="PDB" id="4KZX">
    <property type="method" value="X-ray"/>
    <property type="resolution" value="7.81 A"/>
    <property type="chains" value="G=1-201"/>
</dbReference>
<dbReference type="PDB" id="4KZY">
    <property type="method" value="X-ray"/>
    <property type="resolution" value="7.01 A"/>
    <property type="chains" value="G=1-201"/>
</dbReference>
<dbReference type="PDB" id="4KZZ">
    <property type="method" value="X-ray"/>
    <property type="resolution" value="7.03 A"/>
    <property type="chains" value="G=1-201"/>
</dbReference>
<dbReference type="PDB" id="5K0Y">
    <property type="method" value="EM"/>
    <property type="resolution" value="5.80 A"/>
    <property type="chains" value="q=1-201"/>
</dbReference>
<dbReference type="PDB" id="5LZS">
    <property type="method" value="EM"/>
    <property type="resolution" value="3.31 A"/>
    <property type="chains" value="GG=1-201"/>
</dbReference>
<dbReference type="PDB" id="5LZT">
    <property type="method" value="EM"/>
    <property type="resolution" value="3.65 A"/>
    <property type="chains" value="GG=1-201"/>
</dbReference>
<dbReference type="PDB" id="5LZU">
    <property type="method" value="EM"/>
    <property type="resolution" value="3.75 A"/>
    <property type="chains" value="GG=1-201"/>
</dbReference>
<dbReference type="PDB" id="5LZV">
    <property type="method" value="EM"/>
    <property type="resolution" value="3.35 A"/>
    <property type="chains" value="GG=1-201"/>
</dbReference>
<dbReference type="PDB" id="5LZW">
    <property type="method" value="EM"/>
    <property type="resolution" value="3.53 A"/>
    <property type="chains" value="GG=1-201"/>
</dbReference>
<dbReference type="PDB" id="5LZX">
    <property type="method" value="EM"/>
    <property type="resolution" value="3.67 A"/>
    <property type="chains" value="GG=1-201"/>
</dbReference>
<dbReference type="PDB" id="5LZY">
    <property type="method" value="EM"/>
    <property type="resolution" value="3.99 A"/>
    <property type="chains" value="GG=1-201"/>
</dbReference>
<dbReference type="PDB" id="5LZZ">
    <property type="method" value="EM"/>
    <property type="resolution" value="3.47 A"/>
    <property type="chains" value="GG=1-201"/>
</dbReference>
<dbReference type="PDB" id="6D90">
    <property type="method" value="EM"/>
    <property type="resolution" value="3.20 A"/>
    <property type="chains" value="HH=1-201"/>
</dbReference>
<dbReference type="PDB" id="6D9J">
    <property type="method" value="EM"/>
    <property type="resolution" value="3.20 A"/>
    <property type="chains" value="HH=1-201"/>
</dbReference>
<dbReference type="PDB" id="6GZ3">
    <property type="method" value="EM"/>
    <property type="resolution" value="3.60 A"/>
    <property type="chains" value="BG=1-201"/>
</dbReference>
<dbReference type="PDB" id="6HCF">
    <property type="method" value="EM"/>
    <property type="resolution" value="3.90 A"/>
    <property type="chains" value="H1=1-201"/>
</dbReference>
<dbReference type="PDB" id="6HCJ">
    <property type="method" value="EM"/>
    <property type="resolution" value="3.80 A"/>
    <property type="chains" value="H2=1-201"/>
</dbReference>
<dbReference type="PDB" id="6HCM">
    <property type="method" value="EM"/>
    <property type="resolution" value="6.80 A"/>
    <property type="chains" value="H1=1-201"/>
</dbReference>
<dbReference type="PDB" id="6HCQ">
    <property type="method" value="EM"/>
    <property type="resolution" value="6.50 A"/>
    <property type="chains" value="H2=1-201"/>
</dbReference>
<dbReference type="PDB" id="6MTB">
    <property type="method" value="EM"/>
    <property type="resolution" value="3.60 A"/>
    <property type="chains" value="GG=1-201"/>
</dbReference>
<dbReference type="PDB" id="6MTC">
    <property type="method" value="EM"/>
    <property type="resolution" value="3.40 A"/>
    <property type="chains" value="GG=1-201"/>
</dbReference>
<dbReference type="PDB" id="6MTD">
    <property type="method" value="EM"/>
    <property type="resolution" value="3.30 A"/>
    <property type="chains" value="GG=1-201"/>
</dbReference>
<dbReference type="PDB" id="6MTE">
    <property type="method" value="EM"/>
    <property type="resolution" value="3.40 A"/>
    <property type="chains" value="GG=1-201"/>
</dbReference>
<dbReference type="PDB" id="6P4G">
    <property type="method" value="EM"/>
    <property type="resolution" value="3.10 A"/>
    <property type="chains" value="H=1-201"/>
</dbReference>
<dbReference type="PDB" id="6P4H">
    <property type="method" value="EM"/>
    <property type="resolution" value="3.20 A"/>
    <property type="chains" value="H=1-201"/>
</dbReference>
<dbReference type="PDB" id="6P5I">
    <property type="method" value="EM"/>
    <property type="resolution" value="3.10 A"/>
    <property type="chains" value="H=1-201"/>
</dbReference>
<dbReference type="PDB" id="6P5J">
    <property type="method" value="EM"/>
    <property type="resolution" value="3.10 A"/>
    <property type="chains" value="H=1-201"/>
</dbReference>
<dbReference type="PDB" id="6P5K">
    <property type="method" value="EM"/>
    <property type="resolution" value="3.10 A"/>
    <property type="chains" value="H=1-201"/>
</dbReference>
<dbReference type="PDB" id="6P5N">
    <property type="method" value="EM"/>
    <property type="resolution" value="3.20 A"/>
    <property type="chains" value="H=1-201"/>
</dbReference>
<dbReference type="PDB" id="6R5Q">
    <property type="method" value="EM"/>
    <property type="resolution" value="3.00 A"/>
    <property type="chains" value="z=1-201"/>
</dbReference>
<dbReference type="PDB" id="6R6G">
    <property type="method" value="EM"/>
    <property type="resolution" value="3.70 A"/>
    <property type="chains" value="z=1-201"/>
</dbReference>
<dbReference type="PDB" id="6R6P">
    <property type="method" value="EM"/>
    <property type="resolution" value="3.10 A"/>
    <property type="chains" value="z=1-201"/>
</dbReference>
<dbReference type="PDB" id="6R7Q">
    <property type="method" value="EM"/>
    <property type="resolution" value="3.90 A"/>
    <property type="chains" value="z=1-201"/>
</dbReference>
<dbReference type="PDB" id="6SGC">
    <property type="method" value="EM"/>
    <property type="resolution" value="2.80 A"/>
    <property type="chains" value="H1=1-201"/>
</dbReference>
<dbReference type="PDB" id="6W2S">
    <property type="method" value="EM"/>
    <property type="resolution" value="3.00 A"/>
    <property type="chains" value="H=1-201"/>
</dbReference>
<dbReference type="PDB" id="6W2T">
    <property type="method" value="EM"/>
    <property type="resolution" value="3.36 A"/>
    <property type="chains" value="H=1-201"/>
</dbReference>
<dbReference type="PDB" id="6YAM">
    <property type="method" value="EM"/>
    <property type="resolution" value="3.60 A"/>
    <property type="chains" value="I=1-201"/>
</dbReference>
<dbReference type="PDB" id="6ZVK">
    <property type="method" value="EM"/>
    <property type="resolution" value="3.49 A"/>
    <property type="chains" value="b3=1-201"/>
</dbReference>
<dbReference type="PDB" id="7A01">
    <property type="method" value="EM"/>
    <property type="resolution" value="3.60 A"/>
    <property type="chains" value="b3=1-201"/>
</dbReference>
<dbReference type="PDB" id="7MDZ">
    <property type="method" value="EM"/>
    <property type="resolution" value="3.20 A"/>
    <property type="chains" value="GG=1-201"/>
</dbReference>
<dbReference type="PDB" id="7O7Y">
    <property type="method" value="EM"/>
    <property type="resolution" value="2.20 A"/>
    <property type="chains" value="Af=1-201"/>
</dbReference>
<dbReference type="PDB" id="7O7Z">
    <property type="method" value="EM"/>
    <property type="resolution" value="2.40 A"/>
    <property type="chains" value="Af=1-201"/>
</dbReference>
<dbReference type="PDB" id="7O80">
    <property type="method" value="EM"/>
    <property type="resolution" value="2.90 A"/>
    <property type="chains" value="Af=1-201"/>
</dbReference>
<dbReference type="PDB" id="7O81">
    <property type="method" value="EM"/>
    <property type="resolution" value="3.10 A"/>
    <property type="chains" value="Af=1-201"/>
</dbReference>
<dbReference type="PDB" id="7OYD">
    <property type="method" value="EM"/>
    <property type="resolution" value="2.30 A"/>
    <property type="chains" value="GG=1-201"/>
</dbReference>
<dbReference type="PDB" id="7TOQ">
    <property type="method" value="EM"/>
    <property type="resolution" value="3.10 A"/>
    <property type="chains" value="AS06=1-201"/>
</dbReference>
<dbReference type="PDB" id="7TOR">
    <property type="method" value="EM"/>
    <property type="resolution" value="2.90 A"/>
    <property type="chains" value="AS06=1-201"/>
</dbReference>
<dbReference type="PDB" id="7UCJ">
    <property type="method" value="EM"/>
    <property type="resolution" value="3.10 A"/>
    <property type="chains" value="GG=1-201"/>
</dbReference>
<dbReference type="PDB" id="7UCK">
    <property type="method" value="EM"/>
    <property type="resolution" value="2.80 A"/>
    <property type="chains" value="GG=1-201"/>
</dbReference>
<dbReference type="PDB" id="8BHF">
    <property type="method" value="EM"/>
    <property type="resolution" value="3.10 A"/>
    <property type="chains" value="H3=1-201"/>
</dbReference>
<dbReference type="PDB" id="8BTK">
    <property type="method" value="EM"/>
    <property type="resolution" value="3.50 A"/>
    <property type="chains" value="Af=1-201"/>
</dbReference>
<dbReference type="PDB" id="8P2K">
    <property type="method" value="EM"/>
    <property type="resolution" value="2.90 A"/>
    <property type="chains" value="Af=1-201"/>
</dbReference>
<dbReference type="PDB" id="8SCB">
    <property type="method" value="EM"/>
    <property type="resolution" value="2.50 A"/>
    <property type="chains" value="GG=11-211"/>
</dbReference>
<dbReference type="PDB" id="8VFT">
    <property type="method" value="EM"/>
    <property type="resolution" value="3.30 A"/>
    <property type="chains" value="GG=1-249"/>
</dbReference>
<dbReference type="PDB" id="9BDL">
    <property type="method" value="EM"/>
    <property type="resolution" value="2.80 A"/>
    <property type="chains" value="AS06=1-237"/>
</dbReference>
<dbReference type="PDB" id="9BDN">
    <property type="method" value="EM"/>
    <property type="resolution" value="3.10 A"/>
    <property type="chains" value="AS06=1-237"/>
</dbReference>
<dbReference type="PDB" id="9BDP">
    <property type="method" value="EM"/>
    <property type="resolution" value="3.70 A"/>
    <property type="chains" value="AS06=1-237"/>
</dbReference>
<dbReference type="PDB" id="9C8K">
    <property type="method" value="EM"/>
    <property type="resolution" value="3.10 A"/>
    <property type="chains" value="G=1-249"/>
</dbReference>
<dbReference type="PDB" id="9F1B">
    <property type="method" value="EM"/>
    <property type="resolution" value="3.01 A"/>
    <property type="chains" value="Af=1-249"/>
</dbReference>
<dbReference type="PDB" id="9F1C">
    <property type="method" value="EM"/>
    <property type="resolution" value="3.78 A"/>
    <property type="chains" value="Af=1-249"/>
</dbReference>
<dbReference type="PDB" id="9F1D">
    <property type="method" value="EM"/>
    <property type="resolution" value="3.26 A"/>
    <property type="chains" value="Af=1-249"/>
</dbReference>
<dbReference type="PDBsum" id="3JAG"/>
<dbReference type="PDBsum" id="3JAH"/>
<dbReference type="PDBsum" id="3JAI"/>
<dbReference type="PDBsum" id="4D5L"/>
<dbReference type="PDBsum" id="4D61"/>
<dbReference type="PDBsum" id="4KZX"/>
<dbReference type="PDBsum" id="4KZY"/>
<dbReference type="PDBsum" id="4KZZ"/>
<dbReference type="PDBsum" id="5K0Y"/>
<dbReference type="PDBsum" id="5LZS"/>
<dbReference type="PDBsum" id="5LZT"/>
<dbReference type="PDBsum" id="5LZU"/>
<dbReference type="PDBsum" id="5LZV"/>
<dbReference type="PDBsum" id="5LZW"/>
<dbReference type="PDBsum" id="5LZX"/>
<dbReference type="PDBsum" id="5LZY"/>
<dbReference type="PDBsum" id="5LZZ"/>
<dbReference type="PDBsum" id="6D90"/>
<dbReference type="PDBsum" id="6D9J"/>
<dbReference type="PDBsum" id="6GZ3"/>
<dbReference type="PDBsum" id="6HCF"/>
<dbReference type="PDBsum" id="6HCJ"/>
<dbReference type="PDBsum" id="6HCM"/>
<dbReference type="PDBsum" id="6HCQ"/>
<dbReference type="PDBsum" id="6MTB"/>
<dbReference type="PDBsum" id="6MTC"/>
<dbReference type="PDBsum" id="6MTD"/>
<dbReference type="PDBsum" id="6MTE"/>
<dbReference type="PDBsum" id="6P4G"/>
<dbReference type="PDBsum" id="6P4H"/>
<dbReference type="PDBsum" id="6P5I"/>
<dbReference type="PDBsum" id="6P5J"/>
<dbReference type="PDBsum" id="6P5K"/>
<dbReference type="PDBsum" id="6P5N"/>
<dbReference type="PDBsum" id="6R5Q"/>
<dbReference type="PDBsum" id="6R6G"/>
<dbReference type="PDBsum" id="6R6P"/>
<dbReference type="PDBsum" id="6R7Q"/>
<dbReference type="PDBsum" id="6SGC"/>
<dbReference type="PDBsum" id="6W2S"/>
<dbReference type="PDBsum" id="6W2T"/>
<dbReference type="PDBsum" id="6YAM"/>
<dbReference type="PDBsum" id="6ZVK"/>
<dbReference type="PDBsum" id="7A01"/>
<dbReference type="PDBsum" id="7MDZ"/>
<dbReference type="PDBsum" id="7O7Y"/>
<dbReference type="PDBsum" id="7O7Z"/>
<dbReference type="PDBsum" id="7O80"/>
<dbReference type="PDBsum" id="7O81"/>
<dbReference type="PDBsum" id="7OYD"/>
<dbReference type="PDBsum" id="7TOQ"/>
<dbReference type="PDBsum" id="7TOR"/>
<dbReference type="PDBsum" id="7UCJ"/>
<dbReference type="PDBsum" id="7UCK"/>
<dbReference type="PDBsum" id="8BHF"/>
<dbReference type="PDBsum" id="8BTK"/>
<dbReference type="PDBsum" id="8P2K"/>
<dbReference type="PDBsum" id="8SCB"/>
<dbReference type="PDBsum" id="8VFT"/>
<dbReference type="PDBsum" id="9BDL"/>
<dbReference type="PDBsum" id="9BDN"/>
<dbReference type="PDBsum" id="9BDP"/>
<dbReference type="PDBsum" id="9C8K"/>
<dbReference type="PDBsum" id="9F1B"/>
<dbReference type="PDBsum" id="9F1C"/>
<dbReference type="PDBsum" id="9F1D"/>
<dbReference type="EMDB" id="EMD-0098"/>
<dbReference type="EMDB" id="EMD-0099"/>
<dbReference type="EMDB" id="EMD-0100"/>
<dbReference type="EMDB" id="EMD-0192"/>
<dbReference type="EMDB" id="EMD-0194"/>
<dbReference type="EMDB" id="EMD-0195"/>
<dbReference type="EMDB" id="EMD-0197"/>
<dbReference type="EMDB" id="EMD-10181"/>
<dbReference type="EMDB" id="EMD-10760"/>
<dbReference type="EMDB" id="EMD-10761"/>
<dbReference type="EMDB" id="EMD-10762"/>
<dbReference type="EMDB" id="EMD-11459"/>
<dbReference type="EMDB" id="EMD-11590"/>
<dbReference type="EMDB" id="EMD-12756"/>
<dbReference type="EMDB" id="EMD-12757"/>
<dbReference type="EMDB" id="EMD-12758"/>
<dbReference type="EMDB" id="EMD-12759"/>
<dbReference type="EMDB" id="EMD-13114"/>
<dbReference type="EMDB" id="EMD-16052"/>
<dbReference type="EMDB" id="EMD-16232"/>
<dbReference type="EMDB" id="EMD-17367"/>
<dbReference type="EMDB" id="EMD-20248"/>
<dbReference type="EMDB" id="EMD-20249"/>
<dbReference type="EMDB" id="EMD-20255"/>
<dbReference type="EMDB" id="EMD-20256"/>
<dbReference type="EMDB" id="EMD-20257"/>
<dbReference type="EMDB" id="EMD-20258"/>
<dbReference type="EMDB" id="EMD-21529"/>
<dbReference type="EMDB" id="EMD-21530"/>
<dbReference type="EMDB" id="EMD-22432"/>
<dbReference type="EMDB" id="EMD-22433"/>
<dbReference type="EMDB" id="EMD-23785"/>
<dbReference type="EMDB" id="EMD-25527"/>
<dbReference type="EMDB" id="EMD-25528"/>
<dbReference type="EMDB" id="EMD-25529"/>
<dbReference type="EMDB" id="EMD-25530"/>
<dbReference type="EMDB" id="EMD-25531"/>
<dbReference type="EMDB" id="EMD-25532"/>
<dbReference type="EMDB" id="EMD-25533"/>
<dbReference type="EMDB" id="EMD-25534"/>
<dbReference type="EMDB" id="EMD-25535"/>
<dbReference type="EMDB" id="EMD-25536"/>
<dbReference type="EMDB" id="EMD-25537"/>
<dbReference type="EMDB" id="EMD-25538"/>
<dbReference type="EMDB" id="EMD-25539"/>
<dbReference type="EMDB" id="EMD-25540"/>
<dbReference type="EMDB" id="EMD-25541"/>
<dbReference type="EMDB" id="EMD-25542"/>
<dbReference type="EMDB" id="EMD-25543"/>
<dbReference type="EMDB" id="EMD-25544"/>
<dbReference type="EMDB" id="EMD-26035"/>
<dbReference type="EMDB" id="EMD-26036"/>
<dbReference type="EMDB" id="EMD-26444"/>
<dbReference type="EMDB" id="EMD-26445"/>
<dbReference type="EMDB" id="EMD-40344"/>
<dbReference type="EMDB" id="EMD-4130"/>
<dbReference type="EMDB" id="EMD-4131"/>
<dbReference type="EMDB" id="EMD-4132"/>
<dbReference type="EMDB" id="EMD-4133"/>
<dbReference type="EMDB" id="EMD-4134"/>
<dbReference type="EMDB" id="EMD-4135"/>
<dbReference type="EMDB" id="EMD-4136"/>
<dbReference type="EMDB" id="EMD-4137"/>
<dbReference type="EMDB" id="EMD-43189"/>
<dbReference type="EMDB" id="EMD-44461"/>
<dbReference type="EMDB" id="EMD-44463"/>
<dbReference type="EMDB" id="EMD-44464"/>
<dbReference type="EMDB" id="EMD-45307"/>
<dbReference type="EMDB" id="EMD-4729"/>
<dbReference type="EMDB" id="EMD-4735"/>
<dbReference type="EMDB" id="EMD-4737"/>
<dbReference type="EMDB" id="EMD-4745"/>
<dbReference type="EMDB" id="EMD-50124"/>
<dbReference type="EMDB" id="EMD-50125"/>
<dbReference type="EMDB" id="EMD-50126"/>
<dbReference type="EMDB" id="EMD-7834"/>
<dbReference type="EMDB" id="EMD-7836"/>
<dbReference type="EMDB" id="EMD-8190"/>
<dbReference type="EMDB" id="EMD-9237"/>
<dbReference type="EMDB" id="EMD-9239"/>
<dbReference type="EMDB" id="EMD-9240"/>
<dbReference type="EMDB" id="EMD-9242"/>
<dbReference type="SMR" id="G1TM55"/>
<dbReference type="IntAct" id="G1TM55">
    <property type="interactions" value="1"/>
</dbReference>
<dbReference type="STRING" id="9986.ENSOCUP00000018062"/>
<dbReference type="Ensembl" id="ENSOCUT00000003335.4">
    <property type="protein sequence ID" value="ENSOCUP00000002892.3"/>
    <property type="gene ID" value="ENSOCUG00000003336.4"/>
</dbReference>
<dbReference type="GeneID" id="100338367"/>
<dbReference type="KEGG" id="ocu:100338367"/>
<dbReference type="KEGG" id="ocu:100339133"/>
<dbReference type="KEGG" id="ocu:108178879"/>
<dbReference type="CTD" id="6194"/>
<dbReference type="eggNOG" id="KOG1646">
    <property type="taxonomic scope" value="Eukaryota"/>
</dbReference>
<dbReference type="GeneTree" id="ENSGT00390000009819"/>
<dbReference type="HOGENOM" id="CLU_046346_0_1_1"/>
<dbReference type="InParanoid" id="G1TM55"/>
<dbReference type="OMA" id="KPRYKAP"/>
<dbReference type="TreeFam" id="TF300035"/>
<dbReference type="Proteomes" id="UP000001811">
    <property type="component" value="Chromosome 1"/>
</dbReference>
<dbReference type="Bgee" id="ENSOCUG00000025205">
    <property type="expression patterns" value="Expressed in uterus and 10 other cell types or tissues"/>
</dbReference>
<dbReference type="GO" id="GO:0022626">
    <property type="term" value="C:cytosolic ribosome"/>
    <property type="evidence" value="ECO:0000314"/>
    <property type="project" value="UniProtKB"/>
</dbReference>
<dbReference type="GO" id="GO:0005730">
    <property type="term" value="C:nucleolus"/>
    <property type="evidence" value="ECO:0007669"/>
    <property type="project" value="UniProtKB-SubCell"/>
</dbReference>
<dbReference type="GO" id="GO:1990904">
    <property type="term" value="C:ribonucleoprotein complex"/>
    <property type="evidence" value="ECO:0007669"/>
    <property type="project" value="UniProtKB-KW"/>
</dbReference>
<dbReference type="GO" id="GO:0003735">
    <property type="term" value="F:structural constituent of ribosome"/>
    <property type="evidence" value="ECO:0000314"/>
    <property type="project" value="UniProtKB"/>
</dbReference>
<dbReference type="GO" id="GO:0006412">
    <property type="term" value="P:translation"/>
    <property type="evidence" value="ECO:0007669"/>
    <property type="project" value="InterPro"/>
</dbReference>
<dbReference type="FunFam" id="1.20.5.2650:FF:000001">
    <property type="entry name" value="40S ribosomal protein S6"/>
    <property type="match status" value="1"/>
</dbReference>
<dbReference type="Gene3D" id="1.20.5.2650">
    <property type="match status" value="1"/>
</dbReference>
<dbReference type="InterPro" id="IPR001377">
    <property type="entry name" value="Ribosomal_eS6"/>
</dbReference>
<dbReference type="InterPro" id="IPR014401">
    <property type="entry name" value="Ribosomal_eS6-like"/>
</dbReference>
<dbReference type="InterPro" id="IPR018282">
    <property type="entry name" value="Ribosomal_eS6_CS"/>
</dbReference>
<dbReference type="PANTHER" id="PTHR11502">
    <property type="entry name" value="40S RIBOSOMAL PROTEIN S6"/>
    <property type="match status" value="1"/>
</dbReference>
<dbReference type="Pfam" id="PF01092">
    <property type="entry name" value="Ribosomal_S6e"/>
    <property type="match status" value="1"/>
</dbReference>
<dbReference type="PIRSF" id="PIRSF002129">
    <property type="entry name" value="Ribosom_S6_euk"/>
    <property type="match status" value="1"/>
</dbReference>
<dbReference type="SMART" id="SM01405">
    <property type="entry name" value="Ribosomal_S6e"/>
    <property type="match status" value="1"/>
</dbReference>
<dbReference type="PROSITE" id="PS00578">
    <property type="entry name" value="RIBOSOMAL_S6E"/>
    <property type="match status" value="1"/>
</dbReference>
<comment type="function">
    <text evidence="3 4 5 6 10">Component of the 40S small ribosomal subunit (PubMed:23873042, PubMed:25601755, PubMed:26245381, PubMed:27863242, PubMed:30517857). Plays an important role in controlling cell growth and proliferation through the selective translation of particular classes of mRNA (PubMed:23873042, PubMed:25601755, PubMed:26245381, PubMed:27863242, PubMed:30517857). Part of the small subunit (SSU) processome, first precursor of the small eukaryotic ribosomal subunit (PubMed:23873042, PubMed:25601755, PubMed:26245381, PubMed:27863242, PubMed:30517857). During the assembly of the SSU processome in the nucleolus, many ribosome biogenesis factors, an RNA chaperone and ribosomal proteins associate with the nascent pre-rRNA and work in concert to generate RNA folding, modifications, rearrangements and cleavage as well as targeted degradation of pre-ribosomal RNA by the RNA exosome (PubMed:23873042, PubMed:25601755, PubMed:26245381, PubMed:27863242, PubMed:30517857).</text>
</comment>
<comment type="subunit">
    <text evidence="3 4 5 6 7 8 9 10 11 12 13 14 15 16 17">Component of the small ribosomal subunit (PubMed:23873042, PubMed:25601755, PubMed:26245381, PubMed:27863242, PubMed:29856316, PubMed:30293783, PubMed:30355441, PubMed:30517857, PubMed:31246176, PubMed:31609474, PubMed:31768042, PubMed:32286223, PubMed:33296660, PubMed:35679869, PubMed:36653451). Part of the small subunit (SSU) processome, composed of more than 70 proteins and the RNA chaperone small nucleolar RNA (snoRNA) U3 (PubMed:23873042, PubMed:25601755, PubMed:26245381, PubMed:27863242, PubMed:29856316, PubMed:30293783, PubMed:30355441, PubMed:30517857, PubMed:31246176, PubMed:31609474, PubMed:31768042, PubMed:32286223, PubMed:33296660, PubMed:35679869, PubMed:36653451).</text>
</comment>
<comment type="subcellular location">
    <subcellularLocation>
        <location evidence="3 4 5 6 7 8 9 10 11 12 13 14 15 16 17">Cytoplasm</location>
    </subcellularLocation>
    <subcellularLocation>
        <location evidence="1">Nucleus</location>
        <location evidence="1">Nucleolus</location>
    </subcellularLocation>
</comment>
<comment type="PTM">
    <text evidence="1">Ribosomal protein S6 is the major substrate of protein kinases in eukaryote ribosomes. The phosphorylation is stimulated by growth factors, tumor promoting agents, and mitogens. It is dephosphorylated at growth arrest. Phosphorylated at Ser-235 and Ser-236 by RPS6KA1 and RPS6KA3; phosphorylation at these sites facilitates the assembly of the pre-initiation complex.</text>
</comment>
<comment type="PTM">
    <text evidence="1">Specifically hydroxylated (with R stereochemistry) at C-3 of Arg-137 by KDM8.</text>
</comment>
<comment type="PTM">
    <text evidence="1">Mono-ADP-ribosylation at Glu-35 by PARP16 inhibits polysome assembly and mRNA loading, thereby inhibiting protein translation.</text>
</comment>
<comment type="similarity">
    <text evidence="18">Belongs to the eukaryotic ribosomal protein eS6 family.</text>
</comment>
<name>RS6_RABIT</name>
<reference key="1">
    <citation type="journal article" date="2011" name="Nature">
        <title>A high-resolution map of human evolutionary constraint using 29 mammals.</title>
        <authorList>
            <person name="Lindblad-Toh K."/>
            <person name="Garber M."/>
            <person name="Zuk O."/>
            <person name="Lin M.F."/>
            <person name="Parker B.J."/>
            <person name="Washietl S."/>
            <person name="Kheradpour P."/>
            <person name="Ernst J."/>
            <person name="Jordan G."/>
            <person name="Mauceli E."/>
            <person name="Ward L.D."/>
            <person name="Lowe C.B."/>
            <person name="Holloway A.K."/>
            <person name="Clamp M."/>
            <person name="Gnerre S."/>
            <person name="Alfoldi J."/>
            <person name="Beal K."/>
            <person name="Chang J."/>
            <person name="Clawson H."/>
            <person name="Cuff J."/>
            <person name="Di Palma F."/>
            <person name="Fitzgerald S."/>
            <person name="Flicek P."/>
            <person name="Guttman M."/>
            <person name="Hubisz M.J."/>
            <person name="Jaffe D.B."/>
            <person name="Jungreis I."/>
            <person name="Kent W.J."/>
            <person name="Kostka D."/>
            <person name="Lara M."/>
            <person name="Martins A.L."/>
            <person name="Massingham T."/>
            <person name="Moltke I."/>
            <person name="Raney B.J."/>
            <person name="Rasmussen M.D."/>
            <person name="Robinson J."/>
            <person name="Stark A."/>
            <person name="Vilella A.J."/>
            <person name="Wen J."/>
            <person name="Xie X."/>
            <person name="Zody M.C."/>
            <person name="Baldwin J."/>
            <person name="Bloom T."/>
            <person name="Chin C.W."/>
            <person name="Heiman D."/>
            <person name="Nicol R."/>
            <person name="Nusbaum C."/>
            <person name="Young S."/>
            <person name="Wilkinson J."/>
            <person name="Worley K.C."/>
            <person name="Kovar C.L."/>
            <person name="Muzny D.M."/>
            <person name="Gibbs R.A."/>
            <person name="Cree A."/>
            <person name="Dihn H.H."/>
            <person name="Fowler G."/>
            <person name="Jhangiani S."/>
            <person name="Joshi V."/>
            <person name="Lee S."/>
            <person name="Lewis L.R."/>
            <person name="Nazareth L.V."/>
            <person name="Okwuonu G."/>
            <person name="Santibanez J."/>
            <person name="Warren W.C."/>
            <person name="Mardis E.R."/>
            <person name="Weinstock G.M."/>
            <person name="Wilson R.K."/>
            <person name="Delehaunty K."/>
            <person name="Dooling D."/>
            <person name="Fronik C."/>
            <person name="Fulton L."/>
            <person name="Fulton B."/>
            <person name="Graves T."/>
            <person name="Minx P."/>
            <person name="Sodergren E."/>
            <person name="Birney E."/>
            <person name="Margulies E.H."/>
            <person name="Herrero J."/>
            <person name="Green E.D."/>
            <person name="Haussler D."/>
            <person name="Siepel A."/>
            <person name="Goldman N."/>
            <person name="Pollard K.S."/>
            <person name="Pedersen J.S."/>
            <person name="Lander E.S."/>
            <person name="Kellis M."/>
        </authorList>
    </citation>
    <scope>NUCLEOTIDE SEQUENCE [LARGE SCALE GENOMIC DNA]</scope>
    <source>
        <strain>Thorbecke</strain>
    </source>
</reference>
<reference evidence="23 24" key="2">
    <citation type="journal article" date="2013" name="Nature">
        <title>The initiation of mammalian protein synthesis and mRNA scanning mechanism.</title>
        <authorList>
            <person name="Lomakin I.B."/>
            <person name="Steitz T.A."/>
        </authorList>
    </citation>
    <scope>X-RAY CRYSTALLOGRAPHY (7.01 ANGSTROMS) OF 40S RIBOSOME</scope>
    <scope>FUNCTION</scope>
    <scope>SUBUNIT</scope>
    <scope>SUBCELLULAR LOCATION</scope>
</reference>
<reference evidence="21 22" key="3">
    <citation type="journal article" date="2015" name="Mol. Cell">
        <title>Cryo-EM of ribosomal 80S complexes with termination factors reveals the translocated cricket paralysis virus IRES.</title>
        <authorList>
            <person name="Muhs M."/>
            <person name="Hilal T."/>
            <person name="Mielke T."/>
            <person name="Skabkin M.A."/>
            <person name="Sanbonmatsu K.Y."/>
            <person name="Pestova T.V."/>
            <person name="Spahn C.M."/>
        </authorList>
    </citation>
    <scope>STRUCTURE BY ELECTRON MICROSCOPY (9.00 ANGSTROMS) OF RIBOSOME</scope>
    <scope>FUNCTION</scope>
    <scope>SUBUNIT</scope>
    <scope>SUBCELLULAR LOCATION</scope>
</reference>
<reference evidence="19 20" key="4">
    <citation type="journal article" date="2015" name="Nature">
        <title>Structural basis for stop codon recognition in eukaryotes.</title>
        <authorList>
            <person name="Brown A."/>
            <person name="Shao S."/>
            <person name="Murray J."/>
            <person name="Hegde R.S."/>
            <person name="Ramakrishnan V."/>
        </authorList>
    </citation>
    <scope>STRUCTURE BY ELECTRON MICROSCOPY (3.45 ANGSTROMS) OF 1-235 OF RIBOSOME</scope>
    <scope>FUNCTION</scope>
    <scope>SUBCELLULAR LOCATION</scope>
    <scope>SUBUNIT</scope>
</reference>
<reference evidence="25 26" key="5">
    <citation type="journal article" date="2016" name="Cell">
        <title>Decoding mammalian ribosome-mRNA states by translational GTPase complexes.</title>
        <authorList>
            <person name="Shao S."/>
            <person name="Murray J."/>
            <person name="Brown A."/>
            <person name="Taunton J."/>
            <person name="Ramakrishnan V."/>
            <person name="Hegde R.S."/>
        </authorList>
    </citation>
    <scope>STRUCTURE BY ELECTRON MICROSCOPY (3.31 ANGSTROMS) OF RIBOSOME</scope>
    <scope>FUNCTION</scope>
    <scope>SUBCELLULAR LOCATION</scope>
    <scope>SUBUNIT</scope>
</reference>
<reference evidence="29" key="6">
    <citation type="journal article" date="2018" name="Cell Rep.">
        <title>tRNA translocation by the eukaryotic 80S ribosome and the impact of GTP hydrolysis.</title>
        <authorList>
            <person name="Flis J."/>
            <person name="Holm M."/>
            <person name="Rundlet E.J."/>
            <person name="Loerke J."/>
            <person name="Hilal T."/>
            <person name="Dabrowski M."/>
            <person name="Burger J."/>
            <person name="Mielke T."/>
            <person name="Blanchard S.C."/>
            <person name="Spahn C.M.T."/>
            <person name="Budkevich T.V."/>
        </authorList>
    </citation>
    <scope>STRUCTURE BY ELECTRON MICROSCOPY (3.60 ANGSTROMS) OF 1-230 OF RIBOSOME</scope>
    <scope>FUNCTION</scope>
    <scope>SUBCELLULAR LOCATION</scope>
    <scope>SUBUNIT</scope>
</reference>
<reference evidence="27 28" key="7">
    <citation type="journal article" date="2018" name="Elife">
        <title>Dual tRNA mimicry in the Cricket paralysis virus IRES uncovers an unexpected similarity with the Hepatitis C Virus IRES.</title>
        <authorList>
            <person name="Pisareva V.P."/>
            <person name="Pisarev A.V."/>
            <person name="Fernandez I.S."/>
        </authorList>
    </citation>
    <scope>STRUCTURE BY ELECTRON MICROSCOPY (3.20 ANGSTROMS) OF RIBOSOME</scope>
    <scope>SUBCELLULAR LOCATION</scope>
    <scope>SUBUNIT</scope>
</reference>
<reference evidence="32 33" key="8">
    <citation type="journal article" date="2018" name="Elife">
        <title>Structures of translationally inactive mammalian ribosomes.</title>
        <authorList>
            <person name="Brown A."/>
            <person name="Baird M.R."/>
            <person name="Yip M.C."/>
            <person name="Murray J."/>
            <person name="Shao S."/>
        </authorList>
    </citation>
    <scope>STRUCTURE BY ELECTRON MICROSCOPY (3.30 ANGSTROMS) OF 1-235 OF RIBOSOME</scope>
    <scope>SUBCELLULAR LOCATION</scope>
    <scope>SUBUNIT</scope>
</reference>
<reference evidence="30 31" key="9">
    <citation type="journal article" date="2018" name="Mol. Cell">
        <title>ZNF598 is a quality control sensor of collided ribosomes.</title>
        <authorList>
            <person name="Juszkiewicz S."/>
            <person name="Chandrasekaran V."/>
            <person name="Lin Z."/>
            <person name="Kraatz S."/>
            <person name="Ramakrishnan V."/>
            <person name="Hegde R.S."/>
        </authorList>
    </citation>
    <scope>STRUCTURE BY ELECTRON MICROSCOPY (3.80 ANGSTROMS) OF RIBOSOME</scope>
    <scope>SUBCELLULAR LOCATION</scope>
    <scope>SUBUNIT</scope>
</reference>
<reference evidence="36 37" key="10">
    <citation type="journal article" date="2019" name="Elife">
        <title>Structural and mutational analysis of the ribosome-arresting human XBP1u.</title>
        <authorList>
            <person name="Shanmuganathan V."/>
            <person name="Schiller N."/>
            <person name="Magoulopoulou A."/>
            <person name="Cheng J."/>
            <person name="Braunger K."/>
            <person name="Cymer F."/>
            <person name="Berninghausen O."/>
            <person name="Beatrix B."/>
            <person name="Kohno K."/>
            <person name="von Heijne G."/>
            <person name="Beckmann R."/>
        </authorList>
    </citation>
    <scope>STRUCTURE BY ELECTRON MICROSCOPY (3.00 ANGSTROMS) OF 1-235 OF RIBOSOME</scope>
    <scope>SUBCELLULAR LOCATION</scope>
    <scope>SUBUNIT</scope>
</reference>
<reference evidence="34 35" key="11">
    <citation type="journal article" date="2019" name="EMBO J.">
        <title>The Israeli acute paralysis virus IRES captures host ribosomes by mimicking a ribosomal state with hybrid tRNAs.</title>
        <authorList>
            <person name="Acosta-Reyes F."/>
            <person name="Neupane R."/>
            <person name="Frank J."/>
            <person name="Fernandez I.S."/>
        </authorList>
    </citation>
    <scope>STRUCTURE BY ELECTRON MICROSCOPY (3.10 ANGSTROMS) OF RIBOSOME</scope>
    <scope>SUBUNIT</scope>
    <scope>SUBCELLULAR LOCATION</scope>
</reference>
<reference evidence="38" key="12">
    <citation type="journal article" date="2019" name="Nat. Struct. Mol. Biol.">
        <title>Mechanism of ribosome stalling during translation of a poly(A) tail.</title>
        <authorList>
            <person name="Chandrasekaran V."/>
            <person name="Juszkiewicz S."/>
            <person name="Choi J."/>
            <person name="Puglisi J.D."/>
            <person name="Brown A."/>
            <person name="Shao S."/>
            <person name="Ramakrishnan V."/>
            <person name="Hegde R.S."/>
        </authorList>
    </citation>
    <scope>STRUCTURE BY ELECTRON MICROSCOPY (2.80 ANGSTROMS) OF RIBOSOME</scope>
    <scope>SUBCELLULAR LOCATION</scope>
    <scope>SUBUNIT</scope>
</reference>
<reference evidence="41 42" key="13">
    <citation type="journal article" date="2020" name="Cell Rep.">
        <title>The Halastavi arva virus intergenic region IRES promotes translation by the simplest possible initiation mechanism.</title>
        <authorList>
            <person name="Abaeva I.S."/>
            <person name="Vicens Q."/>
            <person name="Bochler A."/>
            <person name="Soufari H."/>
            <person name="Simonetti A."/>
            <person name="Pestova T.V."/>
            <person name="Hashem Y."/>
            <person name="Hellen C.U.T."/>
        </authorList>
    </citation>
    <scope>STRUCTURE BY ELECTRON MICROSCOPY (3.49 ANGSTROMS) OF RIBOSOME</scope>
    <scope>SUBCELLULAR LOCATION</scope>
    <scope>SUBUNIT</scope>
</reference>
<reference evidence="39 40" key="14">
    <citation type="journal article" date="2020" name="Elife">
        <title>A complex IRES at the 5'-UTR of a viral mRNA assembles a functional 48S complex via an uAUG intermediate.</title>
        <authorList>
            <person name="Neupane R."/>
            <person name="Pisareva V.P."/>
            <person name="Rodriguez C.F."/>
            <person name="Pisarev A.V."/>
            <person name="Fernandez I.S."/>
        </authorList>
    </citation>
    <scope>STRUCTURE BY ELECTRON MICROSCOPY (3.00 ANGSTROMS) OF RIBOSOME</scope>
    <scope>SUBUNIT</scope>
    <scope>SUBCELLULAR LOCATION</scope>
</reference>
<reference evidence="44 45" key="15">
    <citation type="journal article" date="2022" name="Mol. Cell">
        <title>Direct epitranscriptomic regulation of mammalian translation initiation through N4-acetylcytidine.</title>
        <authorList>
            <person name="Arango D."/>
            <person name="Sturgill D."/>
            <person name="Yang R."/>
            <person name="Kanai T."/>
            <person name="Bauer P."/>
            <person name="Roy J."/>
            <person name="Wang Z."/>
            <person name="Hosogane M."/>
            <person name="Schiffers S."/>
            <person name="Oberdoerffer S."/>
        </authorList>
    </citation>
    <scope>STRUCTURE BY ELECTRON MICROSCOPY (2.80 ANGSTROMS) OF RIBOSOME</scope>
    <scope>SUBCELLULAR LOCATION</scope>
    <scope>SUBUNIT</scope>
</reference>
<reference evidence="43" key="16">
    <citation type="journal article" date="2023" name="Nature">
        <title>A molecular network of conserved factors keeps ribosomes dormant in the egg.</title>
        <authorList>
            <person name="Leesch F."/>
            <person name="Lorenzo-Orts L."/>
            <person name="Pribitzer C."/>
            <person name="Grishkovskaya I."/>
            <person name="Roehsner J."/>
            <person name="Chugunova A."/>
            <person name="Matzinger M."/>
            <person name="Roitinger E."/>
            <person name="Belacic K."/>
            <person name="Kandolf S."/>
            <person name="Lin T.Y."/>
            <person name="Mechtler K."/>
            <person name="Meinhart A."/>
            <person name="Haselbach D."/>
            <person name="Pauli A."/>
        </authorList>
    </citation>
    <scope>STRUCTURE BY ELECTRON MICROSCOPY (2.30 ANGSTROMS) OF RIBOSOME</scope>
    <scope>SUBCELLULAR LOCATION</scope>
    <scope>SUBUNIT</scope>
</reference>
<feature type="chain" id="PRO_0000460056" description="Small ribosomal subunit protein eS6">
    <location>
        <begin position="1"/>
        <end position="249"/>
    </location>
</feature>
<feature type="region of interest" description="Disordered" evidence="2">
    <location>
        <begin position="217"/>
        <end position="249"/>
    </location>
</feature>
<feature type="compositionally biased region" description="Basic and acidic residues" evidence="2">
    <location>
        <begin position="217"/>
        <end position="229"/>
    </location>
</feature>
<feature type="compositionally biased region" description="Low complexity" evidence="2">
    <location>
        <begin position="236"/>
        <end position="249"/>
    </location>
</feature>
<feature type="modified residue" description="ADP-ribosyl glutamic acid" evidence="1">
    <location>
        <position position="35"/>
    </location>
</feature>
<feature type="modified residue" description="(3R)-3-hydroxyarginine" evidence="1">
    <location>
        <position position="137"/>
    </location>
</feature>
<feature type="modified residue" description="Phosphoserine" evidence="1">
    <location>
        <position position="148"/>
    </location>
</feature>
<feature type="modified residue" description="N6-acetyllysine" evidence="1">
    <location>
        <position position="211"/>
    </location>
</feature>
<feature type="modified residue" description="Phosphoserine" evidence="1">
    <location>
        <position position="235"/>
    </location>
</feature>
<feature type="modified residue" description="Phosphoserine" evidence="1">
    <location>
        <position position="236"/>
    </location>
</feature>
<feature type="modified residue" description="Phosphoserine" evidence="1">
    <location>
        <position position="240"/>
    </location>
</feature>
<feature type="modified residue" description="Phosphoserine" evidence="1">
    <location>
        <position position="242"/>
    </location>
</feature>
<feature type="modified residue" description="Phosphoserine" evidence="1">
    <location>
        <position position="244"/>
    </location>
</feature>
<feature type="modified residue" description="Phosphoserine" evidence="1">
    <location>
        <position position="247"/>
    </location>
</feature>
<feature type="cross-link" description="Glycyl lysine isopeptide (Lys-Gly) (interchain with G-Cter in SUMO2)" evidence="1">
    <location>
        <position position="14"/>
    </location>
</feature>
<feature type="strand" evidence="46">
    <location>
        <begin position="2"/>
        <end position="7"/>
    </location>
</feature>
<feature type="turn" evidence="46">
    <location>
        <begin position="8"/>
        <end position="11"/>
    </location>
</feature>
<feature type="strand" evidence="46">
    <location>
        <begin position="12"/>
        <end position="16"/>
    </location>
</feature>
<feature type="helix" evidence="46">
    <location>
        <begin position="21"/>
        <end position="24"/>
    </location>
</feature>
<feature type="turn" evidence="46">
    <location>
        <begin position="25"/>
        <end position="29"/>
    </location>
</feature>
<feature type="strand" evidence="46">
    <location>
        <begin position="35"/>
        <end position="37"/>
    </location>
</feature>
<feature type="helix" evidence="47">
    <location>
        <begin position="38"/>
        <end position="40"/>
    </location>
</feature>
<feature type="strand" evidence="46">
    <location>
        <begin position="49"/>
        <end position="52"/>
    </location>
</feature>
<feature type="strand" evidence="46">
    <location>
        <begin position="70"/>
        <end position="76"/>
    </location>
</feature>
<feature type="strand" evidence="46">
    <location>
        <begin position="94"/>
        <end position="98"/>
    </location>
</feature>
<feature type="strand" evidence="47">
    <location>
        <begin position="100"/>
        <end position="102"/>
    </location>
</feature>
<feature type="strand" evidence="46">
    <location>
        <begin position="106"/>
        <end position="115"/>
    </location>
</feature>
<feature type="turn" evidence="46">
    <location>
        <begin position="122"/>
        <end position="125"/>
    </location>
</feature>
<feature type="helix" evidence="46">
    <location>
        <begin position="138"/>
        <end position="144"/>
    </location>
</feature>
<feature type="strand" evidence="46">
    <location>
        <begin position="149"/>
        <end position="151"/>
    </location>
</feature>
<feature type="helix" evidence="46">
    <location>
        <begin position="154"/>
        <end position="156"/>
    </location>
</feature>
<feature type="strand" evidence="46">
    <location>
        <begin position="160"/>
        <end position="162"/>
    </location>
</feature>
<feature type="strand" evidence="46">
    <location>
        <begin position="170"/>
        <end position="172"/>
    </location>
</feature>
<feature type="helix" evidence="46">
    <location>
        <begin position="182"/>
        <end position="236"/>
    </location>
</feature>